<comment type="function">
    <text evidence="1">Involved in peptide bond synthesis. Stimulates efficient translation and peptide-bond synthesis on native or reconstituted 70S ribosomes in vitro. Probably functions indirectly by altering the affinity of the ribosome for aminoacyl-tRNA, thus increasing their reactivity as acceptors for peptidyl transferase.</text>
</comment>
<comment type="pathway">
    <text evidence="1">Protein biosynthesis; polypeptide chain elongation.</text>
</comment>
<comment type="subcellular location">
    <subcellularLocation>
        <location evidence="1">Cytoplasm</location>
    </subcellularLocation>
</comment>
<comment type="similarity">
    <text evidence="1">Belongs to the elongation factor P family.</text>
</comment>
<gene>
    <name evidence="1" type="primary">efp</name>
    <name type="ordered locus">Xaut_2531</name>
</gene>
<organism>
    <name type="scientific">Xanthobacter autotrophicus (strain ATCC BAA-1158 / Py2)</name>
    <dbReference type="NCBI Taxonomy" id="78245"/>
    <lineage>
        <taxon>Bacteria</taxon>
        <taxon>Pseudomonadati</taxon>
        <taxon>Pseudomonadota</taxon>
        <taxon>Alphaproteobacteria</taxon>
        <taxon>Hyphomicrobiales</taxon>
        <taxon>Xanthobacteraceae</taxon>
        <taxon>Xanthobacter</taxon>
    </lineage>
</organism>
<feature type="chain" id="PRO_1000096225" description="Elongation factor P">
    <location>
        <begin position="1"/>
        <end position="189"/>
    </location>
</feature>
<proteinExistence type="inferred from homology"/>
<protein>
    <recommendedName>
        <fullName evidence="1">Elongation factor P</fullName>
        <shortName evidence="1">EF-P</shortName>
    </recommendedName>
</protein>
<sequence length="189" mass="20966">MVKVIASSLRKGNVVDIDDKLYVVLTAENIHPGKGTPVTQLDMRRISDGVKISERYRTTEQVERAFVEDRPHTFLYEDSDGYTFMNPENFDQVIVTKDVMGDSAVYLQEGMECMLSTHNGVPIAIELPARVTLEIVDTEPTVKGQTASSSYKPAKLSNGVRTMVPPHISAGTRVVIMTADNSYVERAKD</sequence>
<name>EFP_XANP2</name>
<keyword id="KW-0963">Cytoplasm</keyword>
<keyword id="KW-0251">Elongation factor</keyword>
<keyword id="KW-0648">Protein biosynthesis</keyword>
<keyword id="KW-1185">Reference proteome</keyword>
<reference key="1">
    <citation type="submission" date="2007-07" db="EMBL/GenBank/DDBJ databases">
        <title>Complete sequence of chromosome of Xanthobacter autotrophicus Py2.</title>
        <authorList>
            <consortium name="US DOE Joint Genome Institute"/>
            <person name="Copeland A."/>
            <person name="Lucas S."/>
            <person name="Lapidus A."/>
            <person name="Barry K."/>
            <person name="Glavina del Rio T."/>
            <person name="Hammon N."/>
            <person name="Israni S."/>
            <person name="Dalin E."/>
            <person name="Tice H."/>
            <person name="Pitluck S."/>
            <person name="Sims D."/>
            <person name="Brettin T."/>
            <person name="Bruce D."/>
            <person name="Detter J.C."/>
            <person name="Han C."/>
            <person name="Tapia R."/>
            <person name="Brainard J."/>
            <person name="Schmutz J."/>
            <person name="Larimer F."/>
            <person name="Land M."/>
            <person name="Hauser L."/>
            <person name="Kyrpides N."/>
            <person name="Kim E."/>
            <person name="Ensigns S.A."/>
            <person name="Richardson P."/>
        </authorList>
    </citation>
    <scope>NUCLEOTIDE SEQUENCE [LARGE SCALE GENOMIC DNA]</scope>
    <source>
        <strain>ATCC BAA-1158 / Py2</strain>
    </source>
</reference>
<accession>A7IID0</accession>
<dbReference type="EMBL" id="CP000781">
    <property type="protein sequence ID" value="ABS67773.1"/>
    <property type="molecule type" value="Genomic_DNA"/>
</dbReference>
<dbReference type="SMR" id="A7IID0"/>
<dbReference type="STRING" id="78245.Xaut_2531"/>
<dbReference type="KEGG" id="xau:Xaut_2531"/>
<dbReference type="eggNOG" id="COG0231">
    <property type="taxonomic scope" value="Bacteria"/>
</dbReference>
<dbReference type="HOGENOM" id="CLU_074944_1_1_5"/>
<dbReference type="OrthoDB" id="9801844at2"/>
<dbReference type="PhylomeDB" id="A7IID0"/>
<dbReference type="UniPathway" id="UPA00345"/>
<dbReference type="Proteomes" id="UP000002417">
    <property type="component" value="Chromosome"/>
</dbReference>
<dbReference type="GO" id="GO:0005737">
    <property type="term" value="C:cytoplasm"/>
    <property type="evidence" value="ECO:0007669"/>
    <property type="project" value="UniProtKB-SubCell"/>
</dbReference>
<dbReference type="GO" id="GO:0003746">
    <property type="term" value="F:translation elongation factor activity"/>
    <property type="evidence" value="ECO:0007669"/>
    <property type="project" value="UniProtKB-UniRule"/>
</dbReference>
<dbReference type="GO" id="GO:0043043">
    <property type="term" value="P:peptide biosynthetic process"/>
    <property type="evidence" value="ECO:0007669"/>
    <property type="project" value="InterPro"/>
</dbReference>
<dbReference type="CDD" id="cd04470">
    <property type="entry name" value="S1_EF-P_repeat_1"/>
    <property type="match status" value="1"/>
</dbReference>
<dbReference type="CDD" id="cd05794">
    <property type="entry name" value="S1_EF-P_repeat_2"/>
    <property type="match status" value="1"/>
</dbReference>
<dbReference type="FunFam" id="2.40.50.140:FF:000004">
    <property type="entry name" value="Elongation factor P"/>
    <property type="match status" value="1"/>
</dbReference>
<dbReference type="FunFam" id="2.40.50.140:FF:000009">
    <property type="entry name" value="Elongation factor P"/>
    <property type="match status" value="1"/>
</dbReference>
<dbReference type="Gene3D" id="2.30.30.30">
    <property type="match status" value="1"/>
</dbReference>
<dbReference type="Gene3D" id="2.40.50.140">
    <property type="entry name" value="Nucleic acid-binding proteins"/>
    <property type="match status" value="2"/>
</dbReference>
<dbReference type="HAMAP" id="MF_00141">
    <property type="entry name" value="EF_P"/>
    <property type="match status" value="1"/>
</dbReference>
<dbReference type="InterPro" id="IPR015365">
    <property type="entry name" value="Elong-fact-P_C"/>
</dbReference>
<dbReference type="InterPro" id="IPR012340">
    <property type="entry name" value="NA-bd_OB-fold"/>
</dbReference>
<dbReference type="InterPro" id="IPR014722">
    <property type="entry name" value="Rib_uL2_dom2"/>
</dbReference>
<dbReference type="InterPro" id="IPR020599">
    <property type="entry name" value="Transl_elong_fac_P/YeiP"/>
</dbReference>
<dbReference type="InterPro" id="IPR013185">
    <property type="entry name" value="Transl_elong_KOW-like"/>
</dbReference>
<dbReference type="InterPro" id="IPR001059">
    <property type="entry name" value="Transl_elong_P/YeiP_cen"/>
</dbReference>
<dbReference type="InterPro" id="IPR013852">
    <property type="entry name" value="Transl_elong_P/YeiP_CS"/>
</dbReference>
<dbReference type="InterPro" id="IPR011768">
    <property type="entry name" value="Transl_elongation_fac_P"/>
</dbReference>
<dbReference type="InterPro" id="IPR008991">
    <property type="entry name" value="Translation_prot_SH3-like_sf"/>
</dbReference>
<dbReference type="NCBIfam" id="TIGR00038">
    <property type="entry name" value="efp"/>
    <property type="match status" value="1"/>
</dbReference>
<dbReference type="NCBIfam" id="NF001810">
    <property type="entry name" value="PRK00529.1"/>
    <property type="match status" value="1"/>
</dbReference>
<dbReference type="PANTHER" id="PTHR30053">
    <property type="entry name" value="ELONGATION FACTOR P"/>
    <property type="match status" value="1"/>
</dbReference>
<dbReference type="PANTHER" id="PTHR30053:SF14">
    <property type="entry name" value="TRANSLATION ELONGATION FACTOR KOW-LIKE DOMAIN-CONTAINING PROTEIN"/>
    <property type="match status" value="1"/>
</dbReference>
<dbReference type="Pfam" id="PF01132">
    <property type="entry name" value="EFP"/>
    <property type="match status" value="1"/>
</dbReference>
<dbReference type="Pfam" id="PF08207">
    <property type="entry name" value="EFP_N"/>
    <property type="match status" value="1"/>
</dbReference>
<dbReference type="Pfam" id="PF09285">
    <property type="entry name" value="Elong-fact-P_C"/>
    <property type="match status" value="1"/>
</dbReference>
<dbReference type="PIRSF" id="PIRSF005901">
    <property type="entry name" value="EF-P"/>
    <property type="match status" value="1"/>
</dbReference>
<dbReference type="SMART" id="SM01185">
    <property type="entry name" value="EFP"/>
    <property type="match status" value="1"/>
</dbReference>
<dbReference type="SMART" id="SM00841">
    <property type="entry name" value="Elong-fact-P_C"/>
    <property type="match status" value="1"/>
</dbReference>
<dbReference type="SUPFAM" id="SSF50249">
    <property type="entry name" value="Nucleic acid-binding proteins"/>
    <property type="match status" value="2"/>
</dbReference>
<dbReference type="SUPFAM" id="SSF50104">
    <property type="entry name" value="Translation proteins SH3-like domain"/>
    <property type="match status" value="1"/>
</dbReference>
<dbReference type="PROSITE" id="PS01275">
    <property type="entry name" value="EFP"/>
    <property type="match status" value="1"/>
</dbReference>
<evidence type="ECO:0000255" key="1">
    <source>
        <dbReference type="HAMAP-Rule" id="MF_00141"/>
    </source>
</evidence>